<comment type="function">
    <text evidence="1">Substrate-binding subunit of tRNA (adenine-N(1)-)-methyltransferase, which catalyzes the formation of N(1)-methyladenine at position 58 (m1A58) in initiator methionyl-tRNA.</text>
</comment>
<comment type="subunit">
    <text evidence="1">Heterotetramer; composed of two copies of TRM6 and two copies of TRM61.</text>
</comment>
<comment type="subcellular location">
    <subcellularLocation>
        <location evidence="1">Nucleus</location>
    </subcellularLocation>
</comment>
<comment type="similarity">
    <text evidence="3">Belongs to the TRM6/GCD10 family.</text>
</comment>
<reference key="1">
    <citation type="journal article" date="2005" name="Nature">
        <title>Genomic sequence of the pathogenic and allergenic filamentous fungus Aspergillus fumigatus.</title>
        <authorList>
            <person name="Nierman W.C."/>
            <person name="Pain A."/>
            <person name="Anderson M.J."/>
            <person name="Wortman J.R."/>
            <person name="Kim H.S."/>
            <person name="Arroyo J."/>
            <person name="Berriman M."/>
            <person name="Abe K."/>
            <person name="Archer D.B."/>
            <person name="Bermejo C."/>
            <person name="Bennett J.W."/>
            <person name="Bowyer P."/>
            <person name="Chen D."/>
            <person name="Collins M."/>
            <person name="Coulsen R."/>
            <person name="Davies R."/>
            <person name="Dyer P.S."/>
            <person name="Farman M.L."/>
            <person name="Fedorova N."/>
            <person name="Fedorova N.D."/>
            <person name="Feldblyum T.V."/>
            <person name="Fischer R."/>
            <person name="Fosker N."/>
            <person name="Fraser A."/>
            <person name="Garcia J.L."/>
            <person name="Garcia M.J."/>
            <person name="Goble A."/>
            <person name="Goldman G.H."/>
            <person name="Gomi K."/>
            <person name="Griffith-Jones S."/>
            <person name="Gwilliam R."/>
            <person name="Haas B.J."/>
            <person name="Haas H."/>
            <person name="Harris D.E."/>
            <person name="Horiuchi H."/>
            <person name="Huang J."/>
            <person name="Humphray S."/>
            <person name="Jimenez J."/>
            <person name="Keller N."/>
            <person name="Khouri H."/>
            <person name="Kitamoto K."/>
            <person name="Kobayashi T."/>
            <person name="Konzack S."/>
            <person name="Kulkarni R."/>
            <person name="Kumagai T."/>
            <person name="Lafton A."/>
            <person name="Latge J.-P."/>
            <person name="Li W."/>
            <person name="Lord A."/>
            <person name="Lu C."/>
            <person name="Majoros W.H."/>
            <person name="May G.S."/>
            <person name="Miller B.L."/>
            <person name="Mohamoud Y."/>
            <person name="Molina M."/>
            <person name="Monod M."/>
            <person name="Mouyna I."/>
            <person name="Mulligan S."/>
            <person name="Murphy L.D."/>
            <person name="O'Neil S."/>
            <person name="Paulsen I."/>
            <person name="Penalva M.A."/>
            <person name="Pertea M."/>
            <person name="Price C."/>
            <person name="Pritchard B.L."/>
            <person name="Quail M.A."/>
            <person name="Rabbinowitsch E."/>
            <person name="Rawlins N."/>
            <person name="Rajandream M.A."/>
            <person name="Reichard U."/>
            <person name="Renauld H."/>
            <person name="Robson G.D."/>
            <person name="Rodriguez de Cordoba S."/>
            <person name="Rodriguez-Pena J.M."/>
            <person name="Ronning C.M."/>
            <person name="Rutter S."/>
            <person name="Salzberg S.L."/>
            <person name="Sanchez M."/>
            <person name="Sanchez-Ferrero J.C."/>
            <person name="Saunders D."/>
            <person name="Seeger K."/>
            <person name="Squares R."/>
            <person name="Squares S."/>
            <person name="Takeuchi M."/>
            <person name="Tekaia F."/>
            <person name="Turner G."/>
            <person name="Vazquez de Aldana C.R."/>
            <person name="Weidman J."/>
            <person name="White O."/>
            <person name="Woodward J.R."/>
            <person name="Yu J.-H."/>
            <person name="Fraser C.M."/>
            <person name="Galagan J.E."/>
            <person name="Asai K."/>
            <person name="Machida M."/>
            <person name="Hall N."/>
            <person name="Barrell B.G."/>
            <person name="Denning D.W."/>
        </authorList>
    </citation>
    <scope>NUCLEOTIDE SEQUENCE [LARGE SCALE GENOMIC DNA]</scope>
    <source>
        <strain>ATCC MYA-4609 / CBS 101355 / FGSC A1100 / Af293</strain>
    </source>
</reference>
<organism>
    <name type="scientific">Aspergillus fumigatus (strain ATCC MYA-4609 / CBS 101355 / FGSC A1100 / Af293)</name>
    <name type="common">Neosartorya fumigata</name>
    <dbReference type="NCBI Taxonomy" id="330879"/>
    <lineage>
        <taxon>Eukaryota</taxon>
        <taxon>Fungi</taxon>
        <taxon>Dikarya</taxon>
        <taxon>Ascomycota</taxon>
        <taxon>Pezizomycotina</taxon>
        <taxon>Eurotiomycetes</taxon>
        <taxon>Eurotiomycetidae</taxon>
        <taxon>Eurotiales</taxon>
        <taxon>Aspergillaceae</taxon>
        <taxon>Aspergillus</taxon>
        <taxon>Aspergillus subgen. Fumigati</taxon>
    </lineage>
</organism>
<name>TRM6_ASPFU</name>
<proteinExistence type="inferred from homology"/>
<protein>
    <recommendedName>
        <fullName>tRNA (adenine(58)-N(1))-methyltransferase non-catalytic subunit trm6</fullName>
    </recommendedName>
    <alternativeName>
        <fullName>tRNA(m1A58)-methyltransferase subunit trm6</fullName>
        <shortName>tRNA(m1A58)MTase subunit trm6</shortName>
    </alternativeName>
</protein>
<dbReference type="EMBL" id="AAHF01000011">
    <property type="protein sequence ID" value="EAL86119.1"/>
    <property type="molecule type" value="Genomic_DNA"/>
</dbReference>
<dbReference type="RefSeq" id="XP_748157.1">
    <property type="nucleotide sequence ID" value="XM_743064.1"/>
</dbReference>
<dbReference type="SMR" id="Q4WE58"/>
<dbReference type="FunCoup" id="Q4WE58">
    <property type="interactions" value="935"/>
</dbReference>
<dbReference type="STRING" id="330879.Q4WE58"/>
<dbReference type="EnsemblFungi" id="EAL86119">
    <property type="protein sequence ID" value="EAL86119"/>
    <property type="gene ID" value="AFUA_5G01850"/>
</dbReference>
<dbReference type="GeneID" id="3505377"/>
<dbReference type="KEGG" id="afm:AFUA_5G01850"/>
<dbReference type="VEuPathDB" id="FungiDB:Afu5g01850"/>
<dbReference type="eggNOG" id="KOG1416">
    <property type="taxonomic scope" value="Eukaryota"/>
</dbReference>
<dbReference type="HOGENOM" id="CLU_010916_2_0_1"/>
<dbReference type="InParanoid" id="Q4WE58"/>
<dbReference type="OMA" id="EGYIFHA"/>
<dbReference type="OrthoDB" id="10254665at2759"/>
<dbReference type="Proteomes" id="UP000002530">
    <property type="component" value="Chromosome 5"/>
</dbReference>
<dbReference type="GO" id="GO:0005634">
    <property type="term" value="C:nucleus"/>
    <property type="evidence" value="ECO:0000318"/>
    <property type="project" value="GO_Central"/>
</dbReference>
<dbReference type="GO" id="GO:0031515">
    <property type="term" value="C:tRNA (m1A) methyltransferase complex"/>
    <property type="evidence" value="ECO:0000318"/>
    <property type="project" value="GO_Central"/>
</dbReference>
<dbReference type="GO" id="GO:0003723">
    <property type="term" value="F:RNA binding"/>
    <property type="evidence" value="ECO:0007669"/>
    <property type="project" value="UniProtKB-KW"/>
</dbReference>
<dbReference type="GO" id="GO:0030488">
    <property type="term" value="P:tRNA methylation"/>
    <property type="evidence" value="ECO:0007669"/>
    <property type="project" value="InterPro"/>
</dbReference>
<dbReference type="InterPro" id="IPR017423">
    <property type="entry name" value="TRM6"/>
</dbReference>
<dbReference type="PANTHER" id="PTHR12945">
    <property type="entry name" value="TRANSLATION INITIATION FACTOR EIF3-RELATED"/>
    <property type="match status" value="1"/>
</dbReference>
<dbReference type="PANTHER" id="PTHR12945:SF0">
    <property type="entry name" value="TRNA (ADENINE(58)-N(1))-METHYLTRANSFERASE NON-CATALYTIC SUBUNIT TRM6"/>
    <property type="match status" value="1"/>
</dbReference>
<dbReference type="Pfam" id="PF04189">
    <property type="entry name" value="Gcd10p"/>
    <property type="match status" value="1"/>
</dbReference>
<keyword id="KW-0539">Nucleus</keyword>
<keyword id="KW-1185">Reference proteome</keyword>
<keyword id="KW-0694">RNA-binding</keyword>
<keyword id="KW-0819">tRNA processing</keyword>
<feature type="chain" id="PRO_0000256158" description="tRNA (adenine(58)-N(1))-methyltransferase non-catalytic subunit trm6">
    <location>
        <begin position="1"/>
        <end position="572"/>
    </location>
</feature>
<feature type="region of interest" description="Disordered" evidence="2">
    <location>
        <begin position="456"/>
        <end position="479"/>
    </location>
</feature>
<feature type="region of interest" description="Disordered" evidence="2">
    <location>
        <begin position="538"/>
        <end position="572"/>
    </location>
</feature>
<feature type="compositionally biased region" description="Low complexity" evidence="2">
    <location>
        <begin position="456"/>
        <end position="465"/>
    </location>
</feature>
<feature type="compositionally biased region" description="Basic and acidic residues" evidence="2">
    <location>
        <begin position="466"/>
        <end position="479"/>
    </location>
</feature>
<accession>Q4WE58</accession>
<gene>
    <name type="primary">trm6</name>
    <name type="ORF">AFUA_5G01850</name>
</gene>
<sequence length="572" mass="63725">MHSYIRPYQHVALRLPSELTKIVRLVPNTVVYLGKYGSFPANTIIGRPFYLTFEIIDVSGENNDNCLRIVPPAELHAETLIADGEGEGDDVEVNEEGIPIRTNREIVDDASTQKMTAEEIEALKKVSTGAGREIIEKLLESHSALDQKTAFSLAKYTLRKRKKFLKRFTVLPVDVSLLTNYMLEGKEAMKTMELRDESIGLIGCWGNVHHGGQSSFEGAVASKPNGRYLVIDETGGLVVAAMAERMGILYPHDQEDEDQELAEGSEENGERQQTNAMAQALARRRHMAASGNSITVIHANKQPSLSLLRYFGYDQDNPDESHPLYKHMKTVSWMQLLDPHADTIYANEPEVIPDETLATFKSNRRSAYYKKRSRWERVRRVVDEARAGNFDGLIVATLMEPASVLKHTVPLLAGSAPVVVYSPTVEPLTELADLYSTPRRTAYITRKREIIAQHSLQQSLQGQSQDNEKKPQEPDFSELDKDFALDPSLLLAPTIETSRVRAWQVLPGRTHPLMSGRGGAEGYIFHAIRVFPSHQNIQAAGNPSRKKRKVAAQQESATPAESGSGVDVEMQS</sequence>
<evidence type="ECO:0000250" key="1">
    <source>
        <dbReference type="UniProtKB" id="P41814"/>
    </source>
</evidence>
<evidence type="ECO:0000256" key="2">
    <source>
        <dbReference type="SAM" id="MobiDB-lite"/>
    </source>
</evidence>
<evidence type="ECO:0000305" key="3"/>